<name>SYT_BRUAB</name>
<reference key="1">
    <citation type="journal article" date="2005" name="J. Bacteriol.">
        <title>Completion of the genome sequence of Brucella abortus and comparison to the highly similar genomes of Brucella melitensis and Brucella suis.</title>
        <authorList>
            <person name="Halling S.M."/>
            <person name="Peterson-Burch B.D."/>
            <person name="Bricker B.J."/>
            <person name="Zuerner R.L."/>
            <person name="Qing Z."/>
            <person name="Li L.-L."/>
            <person name="Kapur V."/>
            <person name="Alt D.P."/>
            <person name="Olsen S.C."/>
        </authorList>
    </citation>
    <scope>NUCLEOTIDE SEQUENCE [LARGE SCALE GENOMIC DNA]</scope>
    <source>
        <strain>9-941</strain>
    </source>
</reference>
<comment type="function">
    <text evidence="1">Catalyzes the attachment of threonine to tRNA(Thr) in a two-step reaction: L-threonine is first activated by ATP to form Thr-AMP and then transferred to the acceptor end of tRNA(Thr). Also edits incorrectly charged L-seryl-tRNA(Thr).</text>
</comment>
<comment type="catalytic activity">
    <reaction evidence="1">
        <text>tRNA(Thr) + L-threonine + ATP = L-threonyl-tRNA(Thr) + AMP + diphosphate + H(+)</text>
        <dbReference type="Rhea" id="RHEA:24624"/>
        <dbReference type="Rhea" id="RHEA-COMP:9670"/>
        <dbReference type="Rhea" id="RHEA-COMP:9704"/>
        <dbReference type="ChEBI" id="CHEBI:15378"/>
        <dbReference type="ChEBI" id="CHEBI:30616"/>
        <dbReference type="ChEBI" id="CHEBI:33019"/>
        <dbReference type="ChEBI" id="CHEBI:57926"/>
        <dbReference type="ChEBI" id="CHEBI:78442"/>
        <dbReference type="ChEBI" id="CHEBI:78534"/>
        <dbReference type="ChEBI" id="CHEBI:456215"/>
        <dbReference type="EC" id="6.1.1.3"/>
    </reaction>
</comment>
<comment type="cofactor">
    <cofactor evidence="1">
        <name>Zn(2+)</name>
        <dbReference type="ChEBI" id="CHEBI:29105"/>
    </cofactor>
    <text evidence="1">Binds 1 zinc ion per subunit.</text>
</comment>
<comment type="subunit">
    <text evidence="1">Homodimer.</text>
</comment>
<comment type="subcellular location">
    <subcellularLocation>
        <location evidence="1">Cytoplasm</location>
    </subcellularLocation>
</comment>
<comment type="similarity">
    <text evidence="1">Belongs to the class-II aminoacyl-tRNA synthetase family.</text>
</comment>
<proteinExistence type="inferred from homology"/>
<sequence>MSNTVSLQFPDGSVREYDASMTGAALAESISKSLAKKAVAYAVDGTVRDLSDPLGASGKLEIITREDPRALELIRHDTAHVLAEAVQELFPGTQVTIGPVIENGFYYDFARNEPFTLDDLPVIEKKMREIIQRNKPFTKEVWSREKAKQVFSDKGESYKVELVDAIPAGQDLKIYYQGDWFDLCRGPHMASTGQIGNSFKLMKVAGAYWRGDANNPMLTRIYGTAFANDNDLQAYLHMLEEAEKRDHRRLGREMDLFHFQEEGPGVVFWHAKGWKMFQNLVSYMRRRLDSHGYQEVNTPQVLDKSLWETSGHWGWYRDNMFKVTVAGDDTDDDRVFALKPMNCPGHVQIFKHGLKSYRDLPIKLAEFGNVHRYEPSGALHGLMRVRGFTQDDAHIFCTEEQMAAECLHINDLILSVYKDFGFEEITIKLSTRPEKRVGSDELWDRAESVMMTVLEQIRQQSNNIKTGILPGEGAFYGPKFEYTLKDAIGREWQCGTTQVDFNLPERFGAFYIGADSEKKQPVMIHRAICGSMERFLGILIENFAGHMPLWFAPVQVVVATITSDADEYAKEAAAKLKAAGLQVVTDLRNEKINYKVREHSLQKVPVILVCGKREAEEKTVNMRRLGSRDQESMTLDEAIARLCEEATPPDLLRLKNAG</sequence>
<protein>
    <recommendedName>
        <fullName evidence="1">Threonine--tRNA ligase</fullName>
        <ecNumber evidence="1">6.1.1.3</ecNumber>
    </recommendedName>
    <alternativeName>
        <fullName evidence="1">Threonyl-tRNA synthetase</fullName>
        <shortName evidence="1">ThrRS</shortName>
    </alternativeName>
</protein>
<dbReference type="EC" id="6.1.1.3" evidence="1"/>
<dbReference type="EMBL" id="AE017223">
    <property type="protein sequence ID" value="AAX74419.1"/>
    <property type="molecule type" value="Genomic_DNA"/>
</dbReference>
<dbReference type="RefSeq" id="WP_002969106.1">
    <property type="nucleotide sequence ID" value="NC_006932.1"/>
</dbReference>
<dbReference type="SMR" id="Q57D65"/>
<dbReference type="EnsemblBacteria" id="AAX74419">
    <property type="protein sequence ID" value="AAX74419"/>
    <property type="gene ID" value="BruAb1_1076"/>
</dbReference>
<dbReference type="GeneID" id="93016584"/>
<dbReference type="KEGG" id="bmb:BruAb1_1076"/>
<dbReference type="HOGENOM" id="CLU_008554_0_1_5"/>
<dbReference type="Proteomes" id="UP000000540">
    <property type="component" value="Chromosome I"/>
</dbReference>
<dbReference type="GO" id="GO:0005829">
    <property type="term" value="C:cytosol"/>
    <property type="evidence" value="ECO:0007669"/>
    <property type="project" value="TreeGrafter"/>
</dbReference>
<dbReference type="GO" id="GO:0005524">
    <property type="term" value="F:ATP binding"/>
    <property type="evidence" value="ECO:0007669"/>
    <property type="project" value="UniProtKB-UniRule"/>
</dbReference>
<dbReference type="GO" id="GO:0046872">
    <property type="term" value="F:metal ion binding"/>
    <property type="evidence" value="ECO:0007669"/>
    <property type="project" value="UniProtKB-KW"/>
</dbReference>
<dbReference type="GO" id="GO:0004829">
    <property type="term" value="F:threonine-tRNA ligase activity"/>
    <property type="evidence" value="ECO:0007669"/>
    <property type="project" value="UniProtKB-UniRule"/>
</dbReference>
<dbReference type="GO" id="GO:0000049">
    <property type="term" value="F:tRNA binding"/>
    <property type="evidence" value="ECO:0007669"/>
    <property type="project" value="UniProtKB-KW"/>
</dbReference>
<dbReference type="GO" id="GO:0006435">
    <property type="term" value="P:threonyl-tRNA aminoacylation"/>
    <property type="evidence" value="ECO:0007669"/>
    <property type="project" value="UniProtKB-UniRule"/>
</dbReference>
<dbReference type="CDD" id="cd01667">
    <property type="entry name" value="TGS_ThrRS"/>
    <property type="match status" value="1"/>
</dbReference>
<dbReference type="CDD" id="cd00860">
    <property type="entry name" value="ThrRS_anticodon"/>
    <property type="match status" value="1"/>
</dbReference>
<dbReference type="CDD" id="cd00771">
    <property type="entry name" value="ThrRS_core"/>
    <property type="match status" value="1"/>
</dbReference>
<dbReference type="FunFam" id="3.30.54.20:FF:000002">
    <property type="entry name" value="Threonine--tRNA ligase"/>
    <property type="match status" value="1"/>
</dbReference>
<dbReference type="FunFam" id="3.30.930.10:FF:000002">
    <property type="entry name" value="Threonine--tRNA ligase"/>
    <property type="match status" value="1"/>
</dbReference>
<dbReference type="FunFam" id="3.40.50.800:FF:000001">
    <property type="entry name" value="Threonine--tRNA ligase"/>
    <property type="match status" value="1"/>
</dbReference>
<dbReference type="FunFam" id="3.30.980.10:FF:000005">
    <property type="entry name" value="Threonyl-tRNA synthetase, mitochondrial"/>
    <property type="match status" value="1"/>
</dbReference>
<dbReference type="Gene3D" id="3.10.20.30">
    <property type="match status" value="1"/>
</dbReference>
<dbReference type="Gene3D" id="3.30.54.20">
    <property type="match status" value="1"/>
</dbReference>
<dbReference type="Gene3D" id="3.40.50.800">
    <property type="entry name" value="Anticodon-binding domain"/>
    <property type="match status" value="1"/>
</dbReference>
<dbReference type="Gene3D" id="3.30.930.10">
    <property type="entry name" value="Bira Bifunctional Protein, Domain 2"/>
    <property type="match status" value="1"/>
</dbReference>
<dbReference type="Gene3D" id="3.30.980.10">
    <property type="entry name" value="Threonyl-trna Synthetase, Chain A, domain 2"/>
    <property type="match status" value="1"/>
</dbReference>
<dbReference type="HAMAP" id="MF_00184">
    <property type="entry name" value="Thr_tRNA_synth"/>
    <property type="match status" value="1"/>
</dbReference>
<dbReference type="InterPro" id="IPR002314">
    <property type="entry name" value="aa-tRNA-synt_IIb"/>
</dbReference>
<dbReference type="InterPro" id="IPR006195">
    <property type="entry name" value="aa-tRNA-synth_II"/>
</dbReference>
<dbReference type="InterPro" id="IPR045864">
    <property type="entry name" value="aa-tRNA-synth_II/BPL/LPL"/>
</dbReference>
<dbReference type="InterPro" id="IPR004154">
    <property type="entry name" value="Anticodon-bd"/>
</dbReference>
<dbReference type="InterPro" id="IPR036621">
    <property type="entry name" value="Anticodon-bd_dom_sf"/>
</dbReference>
<dbReference type="InterPro" id="IPR012675">
    <property type="entry name" value="Beta-grasp_dom_sf"/>
</dbReference>
<dbReference type="InterPro" id="IPR004095">
    <property type="entry name" value="TGS"/>
</dbReference>
<dbReference type="InterPro" id="IPR012676">
    <property type="entry name" value="TGS-like"/>
</dbReference>
<dbReference type="InterPro" id="IPR002320">
    <property type="entry name" value="Thr-tRNA-ligase_IIa"/>
</dbReference>
<dbReference type="InterPro" id="IPR018163">
    <property type="entry name" value="Thr/Ala-tRNA-synth_IIc_edit"/>
</dbReference>
<dbReference type="InterPro" id="IPR047246">
    <property type="entry name" value="ThrRS_anticodon"/>
</dbReference>
<dbReference type="InterPro" id="IPR033728">
    <property type="entry name" value="ThrRS_core"/>
</dbReference>
<dbReference type="InterPro" id="IPR012947">
    <property type="entry name" value="tRNA_SAD"/>
</dbReference>
<dbReference type="NCBIfam" id="TIGR00418">
    <property type="entry name" value="thrS"/>
    <property type="match status" value="1"/>
</dbReference>
<dbReference type="PANTHER" id="PTHR11451:SF44">
    <property type="entry name" value="THREONINE--TRNA LIGASE, CHLOROPLASTIC_MITOCHONDRIAL 2"/>
    <property type="match status" value="1"/>
</dbReference>
<dbReference type="PANTHER" id="PTHR11451">
    <property type="entry name" value="THREONINE-TRNA LIGASE"/>
    <property type="match status" value="1"/>
</dbReference>
<dbReference type="Pfam" id="PF03129">
    <property type="entry name" value="HGTP_anticodon"/>
    <property type="match status" value="1"/>
</dbReference>
<dbReference type="Pfam" id="PF02824">
    <property type="entry name" value="TGS"/>
    <property type="match status" value="1"/>
</dbReference>
<dbReference type="Pfam" id="PF00587">
    <property type="entry name" value="tRNA-synt_2b"/>
    <property type="match status" value="1"/>
</dbReference>
<dbReference type="Pfam" id="PF07973">
    <property type="entry name" value="tRNA_SAD"/>
    <property type="match status" value="1"/>
</dbReference>
<dbReference type="PRINTS" id="PR01047">
    <property type="entry name" value="TRNASYNTHTHR"/>
</dbReference>
<dbReference type="SMART" id="SM00863">
    <property type="entry name" value="tRNA_SAD"/>
    <property type="match status" value="1"/>
</dbReference>
<dbReference type="SUPFAM" id="SSF52954">
    <property type="entry name" value="Class II aaRS ABD-related"/>
    <property type="match status" value="1"/>
</dbReference>
<dbReference type="SUPFAM" id="SSF55681">
    <property type="entry name" value="Class II aaRS and biotin synthetases"/>
    <property type="match status" value="1"/>
</dbReference>
<dbReference type="SUPFAM" id="SSF81271">
    <property type="entry name" value="TGS-like"/>
    <property type="match status" value="1"/>
</dbReference>
<dbReference type="SUPFAM" id="SSF55186">
    <property type="entry name" value="ThrRS/AlaRS common domain"/>
    <property type="match status" value="1"/>
</dbReference>
<dbReference type="PROSITE" id="PS50862">
    <property type="entry name" value="AA_TRNA_LIGASE_II"/>
    <property type="match status" value="1"/>
</dbReference>
<dbReference type="PROSITE" id="PS51880">
    <property type="entry name" value="TGS"/>
    <property type="match status" value="1"/>
</dbReference>
<feature type="chain" id="PRO_0000100947" description="Threonine--tRNA ligase">
    <location>
        <begin position="1"/>
        <end position="658"/>
    </location>
</feature>
<feature type="domain" description="TGS" evidence="2">
    <location>
        <begin position="1"/>
        <end position="64"/>
    </location>
</feature>
<feature type="region of interest" description="Catalytic" evidence="1">
    <location>
        <begin position="246"/>
        <end position="548"/>
    </location>
</feature>
<feature type="binding site" evidence="1">
    <location>
        <position position="343"/>
    </location>
    <ligand>
        <name>Zn(2+)</name>
        <dbReference type="ChEBI" id="CHEBI:29105"/>
    </ligand>
</feature>
<feature type="binding site" evidence="1">
    <location>
        <position position="394"/>
    </location>
    <ligand>
        <name>Zn(2+)</name>
        <dbReference type="ChEBI" id="CHEBI:29105"/>
    </ligand>
</feature>
<feature type="binding site" evidence="1">
    <location>
        <position position="525"/>
    </location>
    <ligand>
        <name>Zn(2+)</name>
        <dbReference type="ChEBI" id="CHEBI:29105"/>
    </ligand>
</feature>
<accession>Q57D65</accession>
<gene>
    <name evidence="1" type="primary">thrS</name>
    <name type="ordered locus">BruAb1_1076</name>
</gene>
<evidence type="ECO:0000255" key="1">
    <source>
        <dbReference type="HAMAP-Rule" id="MF_00184"/>
    </source>
</evidence>
<evidence type="ECO:0000255" key="2">
    <source>
        <dbReference type="PROSITE-ProRule" id="PRU01228"/>
    </source>
</evidence>
<keyword id="KW-0030">Aminoacyl-tRNA synthetase</keyword>
<keyword id="KW-0067">ATP-binding</keyword>
<keyword id="KW-0963">Cytoplasm</keyword>
<keyword id="KW-0436">Ligase</keyword>
<keyword id="KW-0479">Metal-binding</keyword>
<keyword id="KW-0547">Nucleotide-binding</keyword>
<keyword id="KW-0648">Protein biosynthesis</keyword>
<keyword id="KW-0694">RNA-binding</keyword>
<keyword id="KW-0820">tRNA-binding</keyword>
<keyword id="KW-0862">Zinc</keyword>
<organism>
    <name type="scientific">Brucella abortus biovar 1 (strain 9-941)</name>
    <dbReference type="NCBI Taxonomy" id="262698"/>
    <lineage>
        <taxon>Bacteria</taxon>
        <taxon>Pseudomonadati</taxon>
        <taxon>Pseudomonadota</taxon>
        <taxon>Alphaproteobacteria</taxon>
        <taxon>Hyphomicrobiales</taxon>
        <taxon>Brucellaceae</taxon>
        <taxon>Brucella/Ochrobactrum group</taxon>
        <taxon>Brucella</taxon>
    </lineage>
</organism>